<name>UREE_STAA1</name>
<accession>A7X5M4</accession>
<gene>
    <name evidence="1" type="primary">ureE</name>
    <name type="ordered locus">SAHV_2275</name>
</gene>
<proteinExistence type="inferred from homology"/>
<evidence type="ECO:0000255" key="1">
    <source>
        <dbReference type="HAMAP-Rule" id="MF_00822"/>
    </source>
</evidence>
<sequence>MIVEEIQGNIANLSNSEKQKHVEKVYLENSDLVKRIQRVVTDHGTEIGIRLKQPIDLQYGDILYADDHNMIIVDVNSEDLLVIQPRTLQEMGDIAHQLGNRHLPAQFTETEMLVQYDYLVEDLLKSLGIPYVREDRKVNKAFRHIGHSHD</sequence>
<feature type="chain" id="PRO_1000062561" description="Urease accessory protein UreE">
    <location>
        <begin position="1"/>
        <end position="150"/>
    </location>
</feature>
<reference key="1">
    <citation type="journal article" date="2008" name="Antimicrob. Agents Chemother.">
        <title>Mutated response regulator graR is responsible for phenotypic conversion of Staphylococcus aureus from heterogeneous vancomycin-intermediate resistance to vancomycin-intermediate resistance.</title>
        <authorList>
            <person name="Neoh H.-M."/>
            <person name="Cui L."/>
            <person name="Yuzawa H."/>
            <person name="Takeuchi F."/>
            <person name="Matsuo M."/>
            <person name="Hiramatsu K."/>
        </authorList>
    </citation>
    <scope>NUCLEOTIDE SEQUENCE [LARGE SCALE GENOMIC DNA]</scope>
    <source>
        <strain>Mu3 / ATCC 700698</strain>
    </source>
</reference>
<protein>
    <recommendedName>
        <fullName evidence="1">Urease accessory protein UreE</fullName>
    </recommendedName>
</protein>
<organism>
    <name type="scientific">Staphylococcus aureus (strain Mu3 / ATCC 700698)</name>
    <dbReference type="NCBI Taxonomy" id="418127"/>
    <lineage>
        <taxon>Bacteria</taxon>
        <taxon>Bacillati</taxon>
        <taxon>Bacillota</taxon>
        <taxon>Bacilli</taxon>
        <taxon>Bacillales</taxon>
        <taxon>Staphylococcaceae</taxon>
        <taxon>Staphylococcus</taxon>
    </lineage>
</organism>
<dbReference type="EMBL" id="AP009324">
    <property type="protein sequence ID" value="BAF79158.1"/>
    <property type="molecule type" value="Genomic_DNA"/>
</dbReference>
<dbReference type="RefSeq" id="WP_000634589.1">
    <property type="nucleotide sequence ID" value="NZ_CTYB01000019.1"/>
</dbReference>
<dbReference type="SMR" id="A7X5M4"/>
<dbReference type="KEGG" id="saw:SAHV_2275"/>
<dbReference type="HOGENOM" id="CLU_093757_3_1_9"/>
<dbReference type="GO" id="GO:0005737">
    <property type="term" value="C:cytoplasm"/>
    <property type="evidence" value="ECO:0007669"/>
    <property type="project" value="UniProtKB-SubCell"/>
</dbReference>
<dbReference type="GO" id="GO:0016151">
    <property type="term" value="F:nickel cation binding"/>
    <property type="evidence" value="ECO:0007669"/>
    <property type="project" value="UniProtKB-UniRule"/>
</dbReference>
<dbReference type="GO" id="GO:0051082">
    <property type="term" value="F:unfolded protein binding"/>
    <property type="evidence" value="ECO:0007669"/>
    <property type="project" value="UniProtKB-UniRule"/>
</dbReference>
<dbReference type="GO" id="GO:0006457">
    <property type="term" value="P:protein folding"/>
    <property type="evidence" value="ECO:0007669"/>
    <property type="project" value="InterPro"/>
</dbReference>
<dbReference type="GO" id="GO:0065003">
    <property type="term" value="P:protein-containing complex assembly"/>
    <property type="evidence" value="ECO:0007669"/>
    <property type="project" value="InterPro"/>
</dbReference>
<dbReference type="GO" id="GO:0019627">
    <property type="term" value="P:urea metabolic process"/>
    <property type="evidence" value="ECO:0007669"/>
    <property type="project" value="InterPro"/>
</dbReference>
<dbReference type="CDD" id="cd00571">
    <property type="entry name" value="UreE"/>
    <property type="match status" value="1"/>
</dbReference>
<dbReference type="Gene3D" id="2.60.260.20">
    <property type="entry name" value="Urease metallochaperone UreE, N-terminal domain"/>
    <property type="match status" value="1"/>
</dbReference>
<dbReference type="Gene3D" id="3.30.70.790">
    <property type="entry name" value="UreE, C-terminal domain"/>
    <property type="match status" value="1"/>
</dbReference>
<dbReference type="HAMAP" id="MF_00822">
    <property type="entry name" value="UreE"/>
    <property type="match status" value="1"/>
</dbReference>
<dbReference type="InterPro" id="IPR012406">
    <property type="entry name" value="UreE"/>
</dbReference>
<dbReference type="InterPro" id="IPR007864">
    <property type="entry name" value="UreE_C_dom"/>
</dbReference>
<dbReference type="InterPro" id="IPR004029">
    <property type="entry name" value="UreE_N"/>
</dbReference>
<dbReference type="InterPro" id="IPR036118">
    <property type="entry name" value="UreE_N_sf"/>
</dbReference>
<dbReference type="NCBIfam" id="NF009755">
    <property type="entry name" value="PRK13261.2-1"/>
    <property type="match status" value="1"/>
</dbReference>
<dbReference type="Pfam" id="PF05194">
    <property type="entry name" value="UreE_C"/>
    <property type="match status" value="1"/>
</dbReference>
<dbReference type="Pfam" id="PF02814">
    <property type="entry name" value="UreE_N"/>
    <property type="match status" value="1"/>
</dbReference>
<dbReference type="PIRSF" id="PIRSF036402">
    <property type="entry name" value="Ureas_acces_UreE"/>
    <property type="match status" value="1"/>
</dbReference>
<dbReference type="SMART" id="SM00988">
    <property type="entry name" value="UreE_N"/>
    <property type="match status" value="1"/>
</dbReference>
<dbReference type="SUPFAM" id="SSF69737">
    <property type="entry name" value="Urease metallochaperone UreE, C-terminal domain"/>
    <property type="match status" value="1"/>
</dbReference>
<dbReference type="SUPFAM" id="SSF69287">
    <property type="entry name" value="Urease metallochaperone UreE, N-terminal domain"/>
    <property type="match status" value="1"/>
</dbReference>
<keyword id="KW-0143">Chaperone</keyword>
<keyword id="KW-0963">Cytoplasm</keyword>
<keyword id="KW-0533">Nickel</keyword>
<keyword id="KW-0996">Nickel insertion</keyword>
<comment type="function">
    <text evidence="1">Involved in urease metallocenter assembly. Binds nickel. Probably functions as a nickel donor during metallocenter assembly.</text>
</comment>
<comment type="subcellular location">
    <subcellularLocation>
        <location evidence="1">Cytoplasm</location>
    </subcellularLocation>
</comment>
<comment type="similarity">
    <text evidence="1">Belongs to the UreE family.</text>
</comment>